<gene>
    <name evidence="1" type="primary">rpsE</name>
    <name evidence="1" type="synonym">rps5</name>
    <name type="ordered locus">A9601_17491</name>
</gene>
<feature type="chain" id="PRO_1000086041" description="Small ribosomal subunit protein uS5">
    <location>
        <begin position="1"/>
        <end position="206"/>
    </location>
</feature>
<feature type="domain" description="S5 DRBM" evidence="1">
    <location>
        <begin position="50"/>
        <end position="113"/>
    </location>
</feature>
<feature type="region of interest" description="Disordered" evidence="2">
    <location>
        <begin position="1"/>
        <end position="50"/>
    </location>
</feature>
<feature type="compositionally biased region" description="Polar residues" evidence="2">
    <location>
        <begin position="1"/>
        <end position="15"/>
    </location>
</feature>
<feature type="compositionally biased region" description="Basic and acidic residues" evidence="2">
    <location>
        <begin position="38"/>
        <end position="50"/>
    </location>
</feature>
<reference key="1">
    <citation type="journal article" date="2007" name="PLoS Genet.">
        <title>Patterns and implications of gene gain and loss in the evolution of Prochlorococcus.</title>
        <authorList>
            <person name="Kettler G.C."/>
            <person name="Martiny A.C."/>
            <person name="Huang K."/>
            <person name="Zucker J."/>
            <person name="Coleman M.L."/>
            <person name="Rodrigue S."/>
            <person name="Chen F."/>
            <person name="Lapidus A."/>
            <person name="Ferriera S."/>
            <person name="Johnson J."/>
            <person name="Steglich C."/>
            <person name="Church G.M."/>
            <person name="Richardson P."/>
            <person name="Chisholm S.W."/>
        </authorList>
    </citation>
    <scope>NUCLEOTIDE SEQUENCE [LARGE SCALE GENOMIC DNA]</scope>
    <source>
        <strain>AS9601</strain>
    </source>
</reference>
<dbReference type="EMBL" id="CP000551">
    <property type="protein sequence ID" value="ABM71032.1"/>
    <property type="molecule type" value="Genomic_DNA"/>
</dbReference>
<dbReference type="RefSeq" id="WP_011819156.1">
    <property type="nucleotide sequence ID" value="NC_008816.1"/>
</dbReference>
<dbReference type="SMR" id="A2BTC1"/>
<dbReference type="STRING" id="146891.A9601_17491"/>
<dbReference type="KEGG" id="pmb:A9601_17491"/>
<dbReference type="eggNOG" id="COG0098">
    <property type="taxonomic scope" value="Bacteria"/>
</dbReference>
<dbReference type="HOGENOM" id="CLU_065898_2_2_3"/>
<dbReference type="OrthoDB" id="9809045at2"/>
<dbReference type="Proteomes" id="UP000002590">
    <property type="component" value="Chromosome"/>
</dbReference>
<dbReference type="GO" id="GO:0015935">
    <property type="term" value="C:small ribosomal subunit"/>
    <property type="evidence" value="ECO:0007669"/>
    <property type="project" value="InterPro"/>
</dbReference>
<dbReference type="GO" id="GO:0019843">
    <property type="term" value="F:rRNA binding"/>
    <property type="evidence" value="ECO:0007669"/>
    <property type="project" value="UniProtKB-UniRule"/>
</dbReference>
<dbReference type="GO" id="GO:0003735">
    <property type="term" value="F:structural constituent of ribosome"/>
    <property type="evidence" value="ECO:0007669"/>
    <property type="project" value="InterPro"/>
</dbReference>
<dbReference type="GO" id="GO:0006412">
    <property type="term" value="P:translation"/>
    <property type="evidence" value="ECO:0007669"/>
    <property type="project" value="UniProtKB-UniRule"/>
</dbReference>
<dbReference type="FunFam" id="3.30.160.20:FF:000001">
    <property type="entry name" value="30S ribosomal protein S5"/>
    <property type="match status" value="1"/>
</dbReference>
<dbReference type="FunFam" id="3.30.230.10:FF:000002">
    <property type="entry name" value="30S ribosomal protein S5"/>
    <property type="match status" value="1"/>
</dbReference>
<dbReference type="Gene3D" id="3.30.160.20">
    <property type="match status" value="1"/>
</dbReference>
<dbReference type="Gene3D" id="3.30.230.10">
    <property type="match status" value="1"/>
</dbReference>
<dbReference type="HAMAP" id="MF_01307_B">
    <property type="entry name" value="Ribosomal_uS5_B"/>
    <property type="match status" value="1"/>
</dbReference>
<dbReference type="InterPro" id="IPR020568">
    <property type="entry name" value="Ribosomal_Su5_D2-typ_SF"/>
</dbReference>
<dbReference type="InterPro" id="IPR000851">
    <property type="entry name" value="Ribosomal_uS5"/>
</dbReference>
<dbReference type="InterPro" id="IPR005712">
    <property type="entry name" value="Ribosomal_uS5_bac-type"/>
</dbReference>
<dbReference type="InterPro" id="IPR005324">
    <property type="entry name" value="Ribosomal_uS5_C"/>
</dbReference>
<dbReference type="InterPro" id="IPR013810">
    <property type="entry name" value="Ribosomal_uS5_N"/>
</dbReference>
<dbReference type="InterPro" id="IPR018192">
    <property type="entry name" value="Ribosomal_uS5_N_CS"/>
</dbReference>
<dbReference type="InterPro" id="IPR014721">
    <property type="entry name" value="Ribsml_uS5_D2-typ_fold_subgr"/>
</dbReference>
<dbReference type="NCBIfam" id="TIGR01021">
    <property type="entry name" value="rpsE_bact"/>
    <property type="match status" value="1"/>
</dbReference>
<dbReference type="PANTHER" id="PTHR48277">
    <property type="entry name" value="MITOCHONDRIAL RIBOSOMAL PROTEIN S5"/>
    <property type="match status" value="1"/>
</dbReference>
<dbReference type="PANTHER" id="PTHR48277:SF1">
    <property type="entry name" value="MITOCHONDRIAL RIBOSOMAL PROTEIN S5"/>
    <property type="match status" value="1"/>
</dbReference>
<dbReference type="Pfam" id="PF00333">
    <property type="entry name" value="Ribosomal_S5"/>
    <property type="match status" value="1"/>
</dbReference>
<dbReference type="Pfam" id="PF03719">
    <property type="entry name" value="Ribosomal_S5_C"/>
    <property type="match status" value="1"/>
</dbReference>
<dbReference type="SUPFAM" id="SSF54768">
    <property type="entry name" value="dsRNA-binding domain-like"/>
    <property type="match status" value="1"/>
</dbReference>
<dbReference type="SUPFAM" id="SSF54211">
    <property type="entry name" value="Ribosomal protein S5 domain 2-like"/>
    <property type="match status" value="1"/>
</dbReference>
<dbReference type="PROSITE" id="PS00585">
    <property type="entry name" value="RIBOSOMAL_S5"/>
    <property type="match status" value="1"/>
</dbReference>
<dbReference type="PROSITE" id="PS50881">
    <property type="entry name" value="S5_DSRBD"/>
    <property type="match status" value="1"/>
</dbReference>
<protein>
    <recommendedName>
        <fullName evidence="1">Small ribosomal subunit protein uS5</fullName>
    </recommendedName>
    <alternativeName>
        <fullName evidence="3">30S ribosomal protein S5</fullName>
    </alternativeName>
</protein>
<comment type="function">
    <text evidence="1">With S4 and S12 plays an important role in translational accuracy.</text>
</comment>
<comment type="function">
    <text evidence="1">Located at the back of the 30S subunit body where it stabilizes the conformation of the head with respect to the body.</text>
</comment>
<comment type="subunit">
    <text evidence="1">Part of the 30S ribosomal subunit. Contacts proteins S4 and S8.</text>
</comment>
<comment type="domain">
    <text>The N-terminal domain interacts with the head of the 30S subunit; the C-terminal domain interacts with the body and contacts protein S4. The interaction surface between S4 and S5 is involved in control of translational fidelity.</text>
</comment>
<comment type="similarity">
    <text evidence="1">Belongs to the universal ribosomal protein uS5 family.</text>
</comment>
<proteinExistence type="inferred from homology"/>
<evidence type="ECO:0000255" key="1">
    <source>
        <dbReference type="HAMAP-Rule" id="MF_01307"/>
    </source>
</evidence>
<evidence type="ECO:0000256" key="2">
    <source>
        <dbReference type="SAM" id="MobiDB-lite"/>
    </source>
</evidence>
<evidence type="ECO:0000305" key="3"/>
<organism>
    <name type="scientific">Prochlorococcus marinus (strain AS9601)</name>
    <dbReference type="NCBI Taxonomy" id="146891"/>
    <lineage>
        <taxon>Bacteria</taxon>
        <taxon>Bacillati</taxon>
        <taxon>Cyanobacteriota</taxon>
        <taxon>Cyanophyceae</taxon>
        <taxon>Synechococcales</taxon>
        <taxon>Prochlorococcaceae</taxon>
        <taxon>Prochlorococcus</taxon>
    </lineage>
</organism>
<keyword id="KW-0687">Ribonucleoprotein</keyword>
<keyword id="KW-0689">Ribosomal protein</keyword>
<keyword id="KW-0694">RNA-binding</keyword>
<keyword id="KW-0699">rRNA-binding</keyword>
<name>RS5_PROMS</name>
<sequence>MTDTPTKQEIQSKNDNVPAATPVEQKKNNRNDRKRNRRGDSKNLERDSDWQERVVQIRRVSKTVKGGKKMSFRAIVVVGNEKGQVGVGVGKAGDVIGAVRKGVSDGKKNLVRVPLTPNNSIPTLSLGSDGAANVLIRPAAPGTGVIAGGSIRTVLELAGIKNVLAKRLGSKTPLNNARAAMVALSQLRTHKSVSRERGISLEQLYS</sequence>
<accession>A2BTC1</accession>